<keyword id="KW-0046">Antibiotic resistance</keyword>
<keyword id="KW-1003">Cell membrane</keyword>
<keyword id="KW-0472">Membrane</keyword>
<keyword id="KW-0812">Transmembrane</keyword>
<keyword id="KW-1133">Transmembrane helix</keyword>
<name>NSR_LACLL</name>
<organism>
    <name type="scientific">Lactococcus lactis subsp. lactis</name>
    <name type="common">Streptococcus lactis</name>
    <dbReference type="NCBI Taxonomy" id="1360"/>
    <lineage>
        <taxon>Bacteria</taxon>
        <taxon>Bacillati</taxon>
        <taxon>Bacillota</taxon>
        <taxon>Bacilli</taxon>
        <taxon>Lactobacillales</taxon>
        <taxon>Streptococcaceae</taxon>
        <taxon>Lactococcus</taxon>
    </lineage>
</organism>
<gene>
    <name type="primary">nsr</name>
</gene>
<proteinExistence type="predicted"/>
<sequence length="318" mass="35033">MKIGKRILLGLVAVCALFLGIIYLWGYKFNIYLVPPSPQKYVRVALKNMDELGLFTDSKEWVETKKKTIEETSNAKNYAETIPFLQKAIKVAGGKHSFIEHEEDISKRSMTKYIKPKAEIEGNTLILTIPEFTGNDSQASDYANFLESSLHKNNYNGVIVDLRGNRGGDLSPMVLGLSPLLPDGTLFTYVDKSSHSKPVELQNGEINSGGSSTKISDNKKIKKAPIAVLIDNNTGSSGELTALCFEGIPNVKFLGSDSAGYTSANQTVYLYDGSTLQITSAFVKDRTNNIYKNFPISPDIQTNNAKSSAIEWIKSQIK</sequence>
<reference key="1">
    <citation type="journal article" date="1991" name="Appl. Environ. Microbiol.">
        <title>Molecular characterization of the nisin resistance region of Lactococcus lactis subsp. lactis biovar diacetylactis DRC3.</title>
        <authorList>
            <person name="Froseth B.R."/>
            <person name="McKay L.L."/>
        </authorList>
    </citation>
    <scope>NUCLEOTIDE SEQUENCE [GENOMIC DNA]</scope>
    <source>
        <strain>Biovar diacetylactis DRC3</strain>
    </source>
</reference>
<comment type="subcellular location">
    <subcellularLocation>
        <location>Cell membrane</location>
        <topology>Single-pass membrane protein</topology>
    </subcellularLocation>
</comment>
<evidence type="ECO:0000255" key="1"/>
<accession>P23648</accession>
<dbReference type="EMBL" id="M37002">
    <property type="protein sequence ID" value="AAA25202.1"/>
    <property type="molecule type" value="Genomic_DNA"/>
</dbReference>
<dbReference type="PIR" id="A43746">
    <property type="entry name" value="A43746"/>
</dbReference>
<dbReference type="SMR" id="P23648"/>
<dbReference type="GO" id="GO:0005886">
    <property type="term" value="C:plasma membrane"/>
    <property type="evidence" value="ECO:0007669"/>
    <property type="project" value="UniProtKB-SubCell"/>
</dbReference>
<dbReference type="GO" id="GO:0008236">
    <property type="term" value="F:serine-type peptidase activity"/>
    <property type="evidence" value="ECO:0007669"/>
    <property type="project" value="InterPro"/>
</dbReference>
<dbReference type="GO" id="GO:0006508">
    <property type="term" value="P:proteolysis"/>
    <property type="evidence" value="ECO:0007669"/>
    <property type="project" value="InterPro"/>
</dbReference>
<dbReference type="GO" id="GO:0046677">
    <property type="term" value="P:response to antibiotic"/>
    <property type="evidence" value="ECO:0007669"/>
    <property type="project" value="UniProtKB-KW"/>
</dbReference>
<dbReference type="Gene3D" id="3.90.226.10">
    <property type="entry name" value="2-enoyl-CoA Hydratase, Chain A, domain 1"/>
    <property type="match status" value="1"/>
</dbReference>
<dbReference type="InterPro" id="IPR029045">
    <property type="entry name" value="ClpP/crotonase-like_dom_sf"/>
</dbReference>
<dbReference type="InterPro" id="IPR005151">
    <property type="entry name" value="Tail-specific_protease"/>
</dbReference>
<dbReference type="Pfam" id="PF03572">
    <property type="entry name" value="Peptidase_S41"/>
    <property type="match status" value="1"/>
</dbReference>
<dbReference type="SMART" id="SM00245">
    <property type="entry name" value="TSPc"/>
    <property type="match status" value="1"/>
</dbReference>
<dbReference type="SUPFAM" id="SSF52096">
    <property type="entry name" value="ClpP/crotonase"/>
    <property type="match status" value="1"/>
</dbReference>
<feature type="chain" id="PRO_0000057968" description="Nisin-resistance protein">
    <location>
        <begin position="1"/>
        <end position="318"/>
    </location>
</feature>
<feature type="transmembrane region" description="Helical" evidence="1">
    <location>
        <begin position="7"/>
        <end position="28"/>
    </location>
</feature>
<protein>
    <recommendedName>
        <fullName>Nisin-resistance protein</fullName>
    </recommendedName>
</protein>